<organism>
    <name type="scientific">Xylella fastidiosa (strain M23)</name>
    <dbReference type="NCBI Taxonomy" id="405441"/>
    <lineage>
        <taxon>Bacteria</taxon>
        <taxon>Pseudomonadati</taxon>
        <taxon>Pseudomonadota</taxon>
        <taxon>Gammaproteobacteria</taxon>
        <taxon>Lysobacterales</taxon>
        <taxon>Lysobacteraceae</taxon>
        <taxon>Xylella</taxon>
    </lineage>
</organism>
<reference key="1">
    <citation type="journal article" date="2010" name="J. Bacteriol.">
        <title>Whole genome sequences of two Xylella fastidiosa strains (M12 and M23) causing almond leaf scorch disease in California.</title>
        <authorList>
            <person name="Chen J."/>
            <person name="Xie G."/>
            <person name="Han S."/>
            <person name="Chertkov O."/>
            <person name="Sims D."/>
            <person name="Civerolo E.L."/>
        </authorList>
    </citation>
    <scope>NUCLEOTIDE SEQUENCE [LARGE SCALE GENOMIC DNA]</scope>
    <source>
        <strain>M23</strain>
    </source>
</reference>
<proteinExistence type="inferred from homology"/>
<sequence>MHHPLPPDDTLYDQVRPILWTGHFLKLLDQRKLPFVVEYVECHSSEDVTQAIRTLIVRGAPAIGIVAGWGAVLAAREIEAVDGIEALCKLEPALQRLHAARPTAVNLAWVLARMRRTLSAAHADWRQVMECEAESIAREDLTANRCMGAYGAALIPIGSGVLTHCNTGSLATAGFGTALGVIRDGIAQGRIARVFVGETRPWLQGARLTVWELQQDGIDATLIADSAAAHLMKSGQVQWVIVGADRICANGDTANKIGTYQLAITARHHGVKFMVVASAATVDMDTVAGEAIEIEQRDPEELLGVSGVRTVAEGIAAWNPVFDVTPGALIDAIVTERGVIQSPDAAQMRATFGN</sequence>
<comment type="function">
    <text evidence="1">Catalyzes the interconversion of methylthioribose-1-phosphate (MTR-1-P) into methylthioribulose-1-phosphate (MTRu-1-P).</text>
</comment>
<comment type="catalytic activity">
    <reaction evidence="1">
        <text>5-(methylsulfanyl)-alpha-D-ribose 1-phosphate = 5-(methylsulfanyl)-D-ribulose 1-phosphate</text>
        <dbReference type="Rhea" id="RHEA:19989"/>
        <dbReference type="ChEBI" id="CHEBI:58533"/>
        <dbReference type="ChEBI" id="CHEBI:58548"/>
        <dbReference type="EC" id="5.3.1.23"/>
    </reaction>
</comment>
<comment type="pathway">
    <text evidence="1">Amino-acid biosynthesis; L-methionine biosynthesis via salvage pathway; L-methionine from S-methyl-5-thio-alpha-D-ribose 1-phosphate: step 1/6.</text>
</comment>
<comment type="similarity">
    <text evidence="2">Belongs to the eIF-2B alpha/beta/delta subunits family. MtnA subfamily.</text>
</comment>
<protein>
    <recommendedName>
        <fullName evidence="1">Methylthioribose-1-phosphate isomerase</fullName>
        <shortName evidence="1">M1Pi</shortName>
        <shortName evidence="1">MTR-1-P isomerase</shortName>
        <ecNumber evidence="1">5.3.1.23</ecNumber>
    </recommendedName>
    <alternativeName>
        <fullName evidence="1">S-methyl-5-thioribose-1-phosphate isomerase</fullName>
    </alternativeName>
</protein>
<gene>
    <name evidence="1" type="primary">mtnA</name>
    <name type="ordered locus">XfasM23_2043</name>
</gene>
<dbReference type="EC" id="5.3.1.23" evidence="1"/>
<dbReference type="EMBL" id="CP001011">
    <property type="protein sequence ID" value="ACB93441.1"/>
    <property type="molecule type" value="Genomic_DNA"/>
</dbReference>
<dbReference type="RefSeq" id="WP_004090360.1">
    <property type="nucleotide sequence ID" value="NC_010577.1"/>
</dbReference>
<dbReference type="SMR" id="B2I9S0"/>
<dbReference type="GeneID" id="93905797"/>
<dbReference type="KEGG" id="xfn:XfasM23_2043"/>
<dbReference type="HOGENOM" id="CLU_016218_1_2_6"/>
<dbReference type="UniPathway" id="UPA00904">
    <property type="reaction ID" value="UER00874"/>
</dbReference>
<dbReference type="Proteomes" id="UP000001698">
    <property type="component" value="Chromosome"/>
</dbReference>
<dbReference type="GO" id="GO:0046523">
    <property type="term" value="F:S-methyl-5-thioribose-1-phosphate isomerase activity"/>
    <property type="evidence" value="ECO:0007669"/>
    <property type="project" value="UniProtKB-UniRule"/>
</dbReference>
<dbReference type="GO" id="GO:0019509">
    <property type="term" value="P:L-methionine salvage from methylthioadenosine"/>
    <property type="evidence" value="ECO:0007669"/>
    <property type="project" value="UniProtKB-UniRule"/>
</dbReference>
<dbReference type="FunFam" id="1.20.120.420:FF:000003">
    <property type="entry name" value="Methylthioribose-1-phosphate isomerase"/>
    <property type="match status" value="1"/>
</dbReference>
<dbReference type="FunFam" id="3.40.50.10470:FF:000006">
    <property type="entry name" value="Methylthioribose-1-phosphate isomerase"/>
    <property type="match status" value="1"/>
</dbReference>
<dbReference type="Gene3D" id="1.20.120.420">
    <property type="entry name" value="translation initiation factor eif-2b, domain 1"/>
    <property type="match status" value="1"/>
</dbReference>
<dbReference type="Gene3D" id="3.40.50.10470">
    <property type="entry name" value="Translation initiation factor eif-2b, domain 2"/>
    <property type="match status" value="1"/>
</dbReference>
<dbReference type="HAMAP" id="MF_01678">
    <property type="entry name" value="Salvage_MtnA"/>
    <property type="match status" value="1"/>
</dbReference>
<dbReference type="InterPro" id="IPR000649">
    <property type="entry name" value="IF-2B-related"/>
</dbReference>
<dbReference type="InterPro" id="IPR005251">
    <property type="entry name" value="IF-M1Pi"/>
</dbReference>
<dbReference type="InterPro" id="IPR042529">
    <property type="entry name" value="IF_2B-like_C"/>
</dbReference>
<dbReference type="InterPro" id="IPR011559">
    <property type="entry name" value="Initiation_fac_2B_a/b/d"/>
</dbReference>
<dbReference type="InterPro" id="IPR027363">
    <property type="entry name" value="M1Pi_N"/>
</dbReference>
<dbReference type="InterPro" id="IPR037171">
    <property type="entry name" value="NagB/RpiA_transferase-like"/>
</dbReference>
<dbReference type="NCBIfam" id="TIGR00524">
    <property type="entry name" value="eIF-2B_rel"/>
    <property type="match status" value="1"/>
</dbReference>
<dbReference type="NCBIfam" id="NF004326">
    <property type="entry name" value="PRK05720.1"/>
    <property type="match status" value="1"/>
</dbReference>
<dbReference type="NCBIfam" id="TIGR00512">
    <property type="entry name" value="salvage_mtnA"/>
    <property type="match status" value="1"/>
</dbReference>
<dbReference type="PANTHER" id="PTHR43475">
    <property type="entry name" value="METHYLTHIORIBOSE-1-PHOSPHATE ISOMERASE"/>
    <property type="match status" value="1"/>
</dbReference>
<dbReference type="PANTHER" id="PTHR43475:SF1">
    <property type="entry name" value="METHYLTHIORIBOSE-1-PHOSPHATE ISOMERASE"/>
    <property type="match status" value="1"/>
</dbReference>
<dbReference type="Pfam" id="PF01008">
    <property type="entry name" value="IF-2B"/>
    <property type="match status" value="1"/>
</dbReference>
<dbReference type="SUPFAM" id="SSF100950">
    <property type="entry name" value="NagB/RpiA/CoA transferase-like"/>
    <property type="match status" value="1"/>
</dbReference>
<feature type="chain" id="PRO_0000357276" description="Methylthioribose-1-phosphate isomerase">
    <location>
        <begin position="1"/>
        <end position="354"/>
    </location>
</feature>
<feature type="active site" description="Proton donor" evidence="1">
    <location>
        <position position="245"/>
    </location>
</feature>
<feature type="binding site" evidence="1">
    <location>
        <begin position="58"/>
        <end position="60"/>
    </location>
    <ligand>
        <name>substrate</name>
    </ligand>
</feature>
<feature type="binding site" evidence="1">
    <location>
        <position position="101"/>
    </location>
    <ligand>
        <name>substrate</name>
    </ligand>
</feature>
<feature type="binding site" evidence="1">
    <location>
        <position position="204"/>
    </location>
    <ligand>
        <name>substrate</name>
    </ligand>
</feature>
<feature type="binding site" evidence="1">
    <location>
        <begin position="255"/>
        <end position="256"/>
    </location>
    <ligand>
        <name>substrate</name>
    </ligand>
</feature>
<feature type="site" description="Transition state stabilizer" evidence="1">
    <location>
        <position position="165"/>
    </location>
</feature>
<evidence type="ECO:0000255" key="1">
    <source>
        <dbReference type="HAMAP-Rule" id="MF_01678"/>
    </source>
</evidence>
<evidence type="ECO:0000305" key="2"/>
<accession>B2I9S0</accession>
<keyword id="KW-0028">Amino-acid biosynthesis</keyword>
<keyword id="KW-0413">Isomerase</keyword>
<keyword id="KW-0486">Methionine biosynthesis</keyword>
<name>MTNA_XYLF2</name>